<name>RS20_LEPBJ</name>
<comment type="function">
    <text evidence="1">Binds directly to 16S ribosomal RNA.</text>
</comment>
<comment type="similarity">
    <text evidence="1">Belongs to the bacterial ribosomal protein bS20 family.</text>
</comment>
<accession>Q04VI6</accession>
<organism>
    <name type="scientific">Leptospira borgpetersenii serovar Hardjo-bovis (strain JB197)</name>
    <dbReference type="NCBI Taxonomy" id="355277"/>
    <lineage>
        <taxon>Bacteria</taxon>
        <taxon>Pseudomonadati</taxon>
        <taxon>Spirochaetota</taxon>
        <taxon>Spirochaetia</taxon>
        <taxon>Leptospirales</taxon>
        <taxon>Leptospiraceae</taxon>
        <taxon>Leptospira</taxon>
    </lineage>
</organism>
<dbReference type="EMBL" id="CP000350">
    <property type="protein sequence ID" value="ABJ75084.1"/>
    <property type="molecule type" value="Genomic_DNA"/>
</dbReference>
<dbReference type="RefSeq" id="WP_011671516.1">
    <property type="nucleotide sequence ID" value="NC_008510.1"/>
</dbReference>
<dbReference type="SMR" id="Q04VI6"/>
<dbReference type="KEGG" id="lbj:LBJ_0365"/>
<dbReference type="HOGENOM" id="CLU_160655_3_1_12"/>
<dbReference type="Proteomes" id="UP000000656">
    <property type="component" value="Chromosome 1"/>
</dbReference>
<dbReference type="GO" id="GO:0005829">
    <property type="term" value="C:cytosol"/>
    <property type="evidence" value="ECO:0007669"/>
    <property type="project" value="TreeGrafter"/>
</dbReference>
<dbReference type="GO" id="GO:0015935">
    <property type="term" value="C:small ribosomal subunit"/>
    <property type="evidence" value="ECO:0007669"/>
    <property type="project" value="TreeGrafter"/>
</dbReference>
<dbReference type="GO" id="GO:0070181">
    <property type="term" value="F:small ribosomal subunit rRNA binding"/>
    <property type="evidence" value="ECO:0007669"/>
    <property type="project" value="TreeGrafter"/>
</dbReference>
<dbReference type="GO" id="GO:0003735">
    <property type="term" value="F:structural constituent of ribosome"/>
    <property type="evidence" value="ECO:0007669"/>
    <property type="project" value="InterPro"/>
</dbReference>
<dbReference type="GO" id="GO:0006412">
    <property type="term" value="P:translation"/>
    <property type="evidence" value="ECO:0007669"/>
    <property type="project" value="UniProtKB-UniRule"/>
</dbReference>
<dbReference type="FunFam" id="1.20.58.110:FF:000004">
    <property type="entry name" value="30S ribosomal protein S20"/>
    <property type="match status" value="1"/>
</dbReference>
<dbReference type="Gene3D" id="1.20.58.110">
    <property type="entry name" value="Ribosomal protein S20"/>
    <property type="match status" value="1"/>
</dbReference>
<dbReference type="HAMAP" id="MF_00500">
    <property type="entry name" value="Ribosomal_bS20"/>
    <property type="match status" value="1"/>
</dbReference>
<dbReference type="InterPro" id="IPR002583">
    <property type="entry name" value="Ribosomal_bS20"/>
</dbReference>
<dbReference type="InterPro" id="IPR036510">
    <property type="entry name" value="Ribosomal_bS20_sf"/>
</dbReference>
<dbReference type="NCBIfam" id="TIGR00029">
    <property type="entry name" value="S20"/>
    <property type="match status" value="1"/>
</dbReference>
<dbReference type="PANTHER" id="PTHR33398">
    <property type="entry name" value="30S RIBOSOMAL PROTEIN S20"/>
    <property type="match status" value="1"/>
</dbReference>
<dbReference type="PANTHER" id="PTHR33398:SF1">
    <property type="entry name" value="SMALL RIBOSOMAL SUBUNIT PROTEIN BS20C"/>
    <property type="match status" value="1"/>
</dbReference>
<dbReference type="Pfam" id="PF01649">
    <property type="entry name" value="Ribosomal_S20p"/>
    <property type="match status" value="1"/>
</dbReference>
<dbReference type="SUPFAM" id="SSF46992">
    <property type="entry name" value="Ribosomal protein S20"/>
    <property type="match status" value="1"/>
</dbReference>
<evidence type="ECO:0000255" key="1">
    <source>
        <dbReference type="HAMAP-Rule" id="MF_00500"/>
    </source>
</evidence>
<evidence type="ECO:0000256" key="2">
    <source>
        <dbReference type="SAM" id="MobiDB-lite"/>
    </source>
</evidence>
<evidence type="ECO:0000305" key="3"/>
<reference key="1">
    <citation type="journal article" date="2006" name="Proc. Natl. Acad. Sci. U.S.A.">
        <title>Genome reduction in Leptospira borgpetersenii reflects limited transmission potential.</title>
        <authorList>
            <person name="Bulach D.M."/>
            <person name="Zuerner R.L."/>
            <person name="Wilson P."/>
            <person name="Seemann T."/>
            <person name="McGrath A."/>
            <person name="Cullen P.A."/>
            <person name="Davis J."/>
            <person name="Johnson M."/>
            <person name="Kuczek E."/>
            <person name="Alt D.P."/>
            <person name="Peterson-Burch B."/>
            <person name="Coppel R.L."/>
            <person name="Rood J.I."/>
            <person name="Davies J.K."/>
            <person name="Adler B."/>
        </authorList>
    </citation>
    <scope>NUCLEOTIDE SEQUENCE [LARGE SCALE GENOMIC DNA]</scope>
    <source>
        <strain>JB197</strain>
    </source>
</reference>
<protein>
    <recommendedName>
        <fullName evidence="1">Small ribosomal subunit protein bS20</fullName>
    </recommendedName>
    <alternativeName>
        <fullName evidence="3">30S ribosomal protein S20</fullName>
    </alternativeName>
</protein>
<gene>
    <name evidence="1" type="primary">rpsT</name>
    <name type="ordered locus">LBJ_0365</name>
</gene>
<feature type="chain" id="PRO_1000014597" description="Small ribosomal subunit protein bS20">
    <location>
        <begin position="1"/>
        <end position="90"/>
    </location>
</feature>
<feature type="region of interest" description="Disordered" evidence="2">
    <location>
        <begin position="1"/>
        <end position="29"/>
    </location>
</feature>
<feature type="compositionally biased region" description="Basic and acidic residues" evidence="2">
    <location>
        <begin position="1"/>
        <end position="11"/>
    </location>
</feature>
<keyword id="KW-0687">Ribonucleoprotein</keyword>
<keyword id="KW-0689">Ribosomal protein</keyword>
<keyword id="KW-0694">RNA-binding</keyword>
<keyword id="KW-0699">rRNA-binding</keyword>
<proteinExistence type="inferred from homology"/>
<sequence>MANIKSSEKDIRRTKRRNAANSQNRSRLRTQAKKILKAIKEKDPKAAMALFIEYTSFLDKAAKTNLIHSKNADRKKSRMAKRLNAVFAAA</sequence>